<feature type="chain" id="PRO_1000016675" description="tRNA uridine 5-carboxymethylaminomethyl modification enzyme MnmG">
    <location>
        <begin position="1"/>
        <end position="629"/>
    </location>
</feature>
<feature type="binding site" evidence="1">
    <location>
        <begin position="13"/>
        <end position="18"/>
    </location>
    <ligand>
        <name>FAD</name>
        <dbReference type="ChEBI" id="CHEBI:57692"/>
    </ligand>
</feature>
<feature type="binding site" evidence="1">
    <location>
        <position position="125"/>
    </location>
    <ligand>
        <name>FAD</name>
        <dbReference type="ChEBI" id="CHEBI:57692"/>
    </ligand>
</feature>
<feature type="binding site" evidence="1">
    <location>
        <position position="180"/>
    </location>
    <ligand>
        <name>FAD</name>
        <dbReference type="ChEBI" id="CHEBI:57692"/>
    </ligand>
</feature>
<feature type="binding site" evidence="1">
    <location>
        <begin position="273"/>
        <end position="287"/>
    </location>
    <ligand>
        <name>NAD(+)</name>
        <dbReference type="ChEBI" id="CHEBI:57540"/>
    </ligand>
</feature>
<feature type="binding site" evidence="1">
    <location>
        <position position="370"/>
    </location>
    <ligand>
        <name>FAD</name>
        <dbReference type="ChEBI" id="CHEBI:57692"/>
    </ligand>
</feature>
<sequence>MHFHERFDVIVVGGGHAGTEAALAAARMGSKTLLLTHNLDTLGQMSCNPAIGGIGKGHLVKEIDALGGAMAIATDYAGIQFRTLNSSKGPAVRATRAQADRALYRQKIQNILQNQANLRIFQQAVDDLVVDNDRVVGVVTQMGLAFEAPAVVLTAGTFLSGKIHIGLENYSGGRAGDPPSIALAHRLRELPIRVGRLKTGTPPRIDANTIDFTQMTEQKGDTPLPVMSFMGDVSHHPKQISCWITHTNEKTHDIIRGGLDRSPMYSGVIEGIGPRYCPSIEDKIHRFSDKSSHQIFIEPEGLNTNEIYPNGISTSLPFDVQLNLVRSIQGMENAEIVRPGYAIEYDYFDPRDLKNSLETKTINGLFFAGQINGTTGYEEAGAQGLLAGMNAALQVQGKEAWCPRRDEAYIGVLVDDLSTLGTKEPYRMFTSRAEYRLLLREDNADLRLTAKGRELGLVDDARWASFSEKMESIELELQRLRSQWIHPNSPLVPVLNPHLNTPISREASFEELLRRPEMDYSKLMQIEGFGPGLADPLAAEQVQIQVKYSGYIQRQQEEINKAVRNENTGLPLNLDYKEVPGLSNEVIAKLNSHKPETIGQASRISGITPAAISILLVHLKKRGLLRKSA</sequence>
<organism>
    <name type="scientific">Shewanella sp. (strain ANA-3)</name>
    <dbReference type="NCBI Taxonomy" id="94122"/>
    <lineage>
        <taxon>Bacteria</taxon>
        <taxon>Pseudomonadati</taxon>
        <taxon>Pseudomonadota</taxon>
        <taxon>Gammaproteobacteria</taxon>
        <taxon>Alteromonadales</taxon>
        <taxon>Shewanellaceae</taxon>
        <taxon>Shewanella</taxon>
    </lineage>
</organism>
<dbReference type="EMBL" id="CP000469">
    <property type="protein sequence ID" value="ABK46247.1"/>
    <property type="molecule type" value="Genomic_DNA"/>
</dbReference>
<dbReference type="RefSeq" id="WP_011715299.1">
    <property type="nucleotide sequence ID" value="NC_008577.1"/>
</dbReference>
<dbReference type="SMR" id="A0KR28"/>
<dbReference type="STRING" id="94122.Shewana3_0002"/>
<dbReference type="KEGG" id="shn:Shewana3_0002"/>
<dbReference type="eggNOG" id="COG0445">
    <property type="taxonomic scope" value="Bacteria"/>
</dbReference>
<dbReference type="HOGENOM" id="CLU_007831_2_2_6"/>
<dbReference type="OrthoDB" id="9815560at2"/>
<dbReference type="Proteomes" id="UP000002589">
    <property type="component" value="Chromosome"/>
</dbReference>
<dbReference type="GO" id="GO:0005829">
    <property type="term" value="C:cytosol"/>
    <property type="evidence" value="ECO:0007669"/>
    <property type="project" value="TreeGrafter"/>
</dbReference>
<dbReference type="GO" id="GO:0050660">
    <property type="term" value="F:flavin adenine dinucleotide binding"/>
    <property type="evidence" value="ECO:0007669"/>
    <property type="project" value="UniProtKB-UniRule"/>
</dbReference>
<dbReference type="GO" id="GO:0030488">
    <property type="term" value="P:tRNA methylation"/>
    <property type="evidence" value="ECO:0007669"/>
    <property type="project" value="TreeGrafter"/>
</dbReference>
<dbReference type="GO" id="GO:0002098">
    <property type="term" value="P:tRNA wobble uridine modification"/>
    <property type="evidence" value="ECO:0007669"/>
    <property type="project" value="InterPro"/>
</dbReference>
<dbReference type="FunFam" id="1.10.10.1800:FF:000001">
    <property type="entry name" value="tRNA uridine 5-carboxymethylaminomethyl modification enzyme MnmG"/>
    <property type="match status" value="1"/>
</dbReference>
<dbReference type="FunFam" id="1.10.150.570:FF:000001">
    <property type="entry name" value="tRNA uridine 5-carboxymethylaminomethyl modification enzyme MnmG"/>
    <property type="match status" value="1"/>
</dbReference>
<dbReference type="FunFam" id="3.50.50.60:FF:000002">
    <property type="entry name" value="tRNA uridine 5-carboxymethylaminomethyl modification enzyme MnmG"/>
    <property type="match status" value="1"/>
</dbReference>
<dbReference type="FunFam" id="3.50.50.60:FF:000010">
    <property type="entry name" value="tRNA uridine 5-carboxymethylaminomethyl modification enzyme MnmG"/>
    <property type="match status" value="1"/>
</dbReference>
<dbReference type="Gene3D" id="3.50.50.60">
    <property type="entry name" value="FAD/NAD(P)-binding domain"/>
    <property type="match status" value="2"/>
</dbReference>
<dbReference type="Gene3D" id="1.10.150.570">
    <property type="entry name" value="GidA associated domain, C-terminal subdomain"/>
    <property type="match status" value="1"/>
</dbReference>
<dbReference type="Gene3D" id="1.10.10.1800">
    <property type="entry name" value="tRNA uridine 5-carboxymethylaminomethyl modification enzyme MnmG/GidA"/>
    <property type="match status" value="1"/>
</dbReference>
<dbReference type="HAMAP" id="MF_00129">
    <property type="entry name" value="MnmG_GidA"/>
    <property type="match status" value="1"/>
</dbReference>
<dbReference type="InterPro" id="IPR036188">
    <property type="entry name" value="FAD/NAD-bd_sf"/>
</dbReference>
<dbReference type="InterPro" id="IPR049312">
    <property type="entry name" value="GIDA_C_N"/>
</dbReference>
<dbReference type="InterPro" id="IPR004416">
    <property type="entry name" value="MnmG"/>
</dbReference>
<dbReference type="InterPro" id="IPR002218">
    <property type="entry name" value="MnmG-rel"/>
</dbReference>
<dbReference type="InterPro" id="IPR020595">
    <property type="entry name" value="MnmG-rel_CS"/>
</dbReference>
<dbReference type="InterPro" id="IPR026904">
    <property type="entry name" value="MnmG_C"/>
</dbReference>
<dbReference type="InterPro" id="IPR047001">
    <property type="entry name" value="MnmG_C_subdom"/>
</dbReference>
<dbReference type="InterPro" id="IPR044920">
    <property type="entry name" value="MnmG_C_subdom_sf"/>
</dbReference>
<dbReference type="InterPro" id="IPR040131">
    <property type="entry name" value="MnmG_N"/>
</dbReference>
<dbReference type="NCBIfam" id="TIGR00136">
    <property type="entry name" value="mnmG_gidA"/>
    <property type="match status" value="1"/>
</dbReference>
<dbReference type="PANTHER" id="PTHR11806">
    <property type="entry name" value="GLUCOSE INHIBITED DIVISION PROTEIN A"/>
    <property type="match status" value="1"/>
</dbReference>
<dbReference type="PANTHER" id="PTHR11806:SF0">
    <property type="entry name" value="PROTEIN MTO1 HOMOLOG, MITOCHONDRIAL"/>
    <property type="match status" value="1"/>
</dbReference>
<dbReference type="Pfam" id="PF01134">
    <property type="entry name" value="GIDA"/>
    <property type="match status" value="1"/>
</dbReference>
<dbReference type="Pfam" id="PF21680">
    <property type="entry name" value="GIDA_C_1st"/>
    <property type="match status" value="1"/>
</dbReference>
<dbReference type="Pfam" id="PF13932">
    <property type="entry name" value="SAM_GIDA_C"/>
    <property type="match status" value="1"/>
</dbReference>
<dbReference type="SMART" id="SM01228">
    <property type="entry name" value="GIDA_assoc_3"/>
    <property type="match status" value="1"/>
</dbReference>
<dbReference type="SUPFAM" id="SSF51905">
    <property type="entry name" value="FAD/NAD(P)-binding domain"/>
    <property type="match status" value="1"/>
</dbReference>
<dbReference type="PROSITE" id="PS01280">
    <property type="entry name" value="GIDA_1"/>
    <property type="match status" value="1"/>
</dbReference>
<dbReference type="PROSITE" id="PS01281">
    <property type="entry name" value="GIDA_2"/>
    <property type="match status" value="1"/>
</dbReference>
<comment type="function">
    <text evidence="1">NAD-binding protein involved in the addition of a carboxymethylaminomethyl (cmnm) group at the wobble position (U34) of certain tRNAs, forming tRNA-cmnm(5)s(2)U34.</text>
</comment>
<comment type="cofactor">
    <cofactor evidence="1">
        <name>FAD</name>
        <dbReference type="ChEBI" id="CHEBI:57692"/>
    </cofactor>
</comment>
<comment type="subunit">
    <text evidence="1">Homodimer. Heterotetramer of two MnmE and two MnmG subunits.</text>
</comment>
<comment type="subcellular location">
    <subcellularLocation>
        <location evidence="1">Cytoplasm</location>
    </subcellularLocation>
</comment>
<comment type="similarity">
    <text evidence="1">Belongs to the MnmG family.</text>
</comment>
<name>MNMG_SHESA</name>
<protein>
    <recommendedName>
        <fullName evidence="1">tRNA uridine 5-carboxymethylaminomethyl modification enzyme MnmG</fullName>
    </recommendedName>
    <alternativeName>
        <fullName evidence="1">Glucose-inhibited division protein A</fullName>
    </alternativeName>
</protein>
<keyword id="KW-0963">Cytoplasm</keyword>
<keyword id="KW-0274">FAD</keyword>
<keyword id="KW-0285">Flavoprotein</keyword>
<keyword id="KW-0520">NAD</keyword>
<keyword id="KW-0819">tRNA processing</keyword>
<evidence type="ECO:0000255" key="1">
    <source>
        <dbReference type="HAMAP-Rule" id="MF_00129"/>
    </source>
</evidence>
<proteinExistence type="inferred from homology"/>
<accession>A0KR28</accession>
<reference key="1">
    <citation type="submission" date="2006-09" db="EMBL/GenBank/DDBJ databases">
        <title>Complete sequence of chromosome 1 of Shewanella sp. ANA-3.</title>
        <authorList>
            <person name="Copeland A."/>
            <person name="Lucas S."/>
            <person name="Lapidus A."/>
            <person name="Barry K."/>
            <person name="Detter J.C."/>
            <person name="Glavina del Rio T."/>
            <person name="Hammon N."/>
            <person name="Israni S."/>
            <person name="Dalin E."/>
            <person name="Tice H."/>
            <person name="Pitluck S."/>
            <person name="Chertkov O."/>
            <person name="Brettin T."/>
            <person name="Bruce D."/>
            <person name="Han C."/>
            <person name="Tapia R."/>
            <person name="Gilna P."/>
            <person name="Schmutz J."/>
            <person name="Larimer F."/>
            <person name="Land M."/>
            <person name="Hauser L."/>
            <person name="Kyrpides N."/>
            <person name="Kim E."/>
            <person name="Newman D."/>
            <person name="Salticov C."/>
            <person name="Konstantinidis K."/>
            <person name="Klappenback J."/>
            <person name="Tiedje J."/>
            <person name="Richardson P."/>
        </authorList>
    </citation>
    <scope>NUCLEOTIDE SEQUENCE [LARGE SCALE GENOMIC DNA]</scope>
    <source>
        <strain>ANA-3</strain>
    </source>
</reference>
<gene>
    <name evidence="1" type="primary">mnmG</name>
    <name evidence="1" type="synonym">gidA</name>
    <name type="ordered locus">Shewana3_0002</name>
</gene>